<accession>P28866</accession>
<accession>Q6S6U3</accession>
<name>UNG_EHV1B</name>
<comment type="function">
    <text evidence="1">Excises uracil residues from the DNA which can arise as a result of misincorporation of dUMP residues by DNA polymerase or deamination of cytosines. Therefore may reduce deleterious uracil incorporation into the viral genome, particularly in terminally differentiated cells which lack DNA repair enzymes.</text>
</comment>
<comment type="catalytic activity">
    <reaction evidence="1">
        <text>Hydrolyzes single-stranded DNA or mismatched double-stranded DNA and polynucleotides, releasing free uracil.</text>
        <dbReference type="EC" id="3.2.2.27"/>
    </reaction>
</comment>
<comment type="subcellular location">
    <subcellularLocation>
        <location evidence="1">Host nucleus</location>
    </subcellularLocation>
</comment>
<comment type="similarity">
    <text evidence="1">Belongs to the uracil-DNA glycosylase (UDG) superfamily. UNG family.</text>
</comment>
<reference key="1">
    <citation type="journal article" date="1992" name="Virology">
        <title>The DNA sequence of equine herpesvirus-1.</title>
        <authorList>
            <person name="Telford E.A.R."/>
            <person name="Watson M.S."/>
            <person name="McBride K."/>
            <person name="Davison A.J."/>
        </authorList>
    </citation>
    <scope>NUCLEOTIDE SEQUENCE [LARGE SCALE GENOMIC DNA]</scope>
</reference>
<reference key="2">
    <citation type="submission" date="2004-06" db="EMBL/GenBank/DDBJ databases">
        <authorList>
            <person name="Davison A.J."/>
        </authorList>
    </citation>
    <scope>NUCLEOTIDE SEQUENCE [GENOMIC DNA]</scope>
</reference>
<gene>
    <name type="primary">61</name>
</gene>
<protein>
    <recommendedName>
        <fullName evidence="1">Uracil-DNA glycosylase</fullName>
        <shortName evidence="1">UDG</shortName>
        <ecNumber evidence="1">3.2.2.27</ecNumber>
    </recommendedName>
    <alternativeName>
        <fullName evidence="1">UNG</fullName>
    </alternativeName>
</protein>
<feature type="chain" id="PRO_0000176193" description="Uracil-DNA glycosylase">
    <location>
        <begin position="1"/>
        <end position="312"/>
    </location>
</feature>
<feature type="region of interest" description="Disordered" evidence="2">
    <location>
        <begin position="1"/>
        <end position="61"/>
    </location>
</feature>
<feature type="compositionally biased region" description="Basic and acidic residues" evidence="2">
    <location>
        <begin position="1"/>
        <end position="11"/>
    </location>
</feature>
<feature type="compositionally biased region" description="Polar residues" evidence="2">
    <location>
        <begin position="22"/>
        <end position="33"/>
    </location>
</feature>
<feature type="active site" description="Proton acceptor" evidence="1">
    <location>
        <position position="155"/>
    </location>
</feature>
<organismHost>
    <name type="scientific">Equus caballus</name>
    <name type="common">Horse</name>
    <dbReference type="NCBI Taxonomy" id="9796"/>
</organismHost>
<proteinExistence type="inferred from homology"/>
<dbReference type="EC" id="3.2.2.27" evidence="1"/>
<dbReference type="EMBL" id="AY665713">
    <property type="protein sequence ID" value="AAT67318.1"/>
    <property type="molecule type" value="Genomic_DNA"/>
</dbReference>
<dbReference type="PIR" id="G36801">
    <property type="entry name" value="DGBEF3"/>
</dbReference>
<dbReference type="SMR" id="P28866"/>
<dbReference type="KEGG" id="vg:2948563"/>
<dbReference type="Proteomes" id="UP000001189">
    <property type="component" value="Segment"/>
</dbReference>
<dbReference type="GO" id="GO:0042025">
    <property type="term" value="C:host cell nucleus"/>
    <property type="evidence" value="ECO:0007669"/>
    <property type="project" value="UniProtKB-SubCell"/>
</dbReference>
<dbReference type="GO" id="GO:0004844">
    <property type="term" value="F:uracil DNA N-glycosylase activity"/>
    <property type="evidence" value="ECO:0007669"/>
    <property type="project" value="UniProtKB-EC"/>
</dbReference>
<dbReference type="GO" id="GO:0097510">
    <property type="term" value="P:base-excision repair, AP site formation via deaminated base removal"/>
    <property type="evidence" value="ECO:0007669"/>
    <property type="project" value="TreeGrafter"/>
</dbReference>
<dbReference type="CDD" id="cd10027">
    <property type="entry name" value="UDG-F1-like"/>
    <property type="match status" value="1"/>
</dbReference>
<dbReference type="Gene3D" id="3.40.470.10">
    <property type="entry name" value="Uracil-DNA glycosylase-like domain"/>
    <property type="match status" value="1"/>
</dbReference>
<dbReference type="HAMAP" id="MF_00148">
    <property type="entry name" value="UDG"/>
    <property type="match status" value="1"/>
</dbReference>
<dbReference type="InterPro" id="IPR002043">
    <property type="entry name" value="UDG_fam1"/>
</dbReference>
<dbReference type="InterPro" id="IPR018085">
    <property type="entry name" value="Ura-DNA_Glyclase_AS"/>
</dbReference>
<dbReference type="InterPro" id="IPR005122">
    <property type="entry name" value="Uracil-DNA_glycosylase-like"/>
</dbReference>
<dbReference type="InterPro" id="IPR036895">
    <property type="entry name" value="Uracil-DNA_glycosylase-like_sf"/>
</dbReference>
<dbReference type="NCBIfam" id="NF003588">
    <property type="entry name" value="PRK05254.1-1"/>
    <property type="match status" value="1"/>
</dbReference>
<dbReference type="NCBIfam" id="NF003589">
    <property type="entry name" value="PRK05254.1-2"/>
    <property type="match status" value="1"/>
</dbReference>
<dbReference type="NCBIfam" id="NF003592">
    <property type="entry name" value="PRK05254.1-5"/>
    <property type="match status" value="1"/>
</dbReference>
<dbReference type="NCBIfam" id="TIGR00628">
    <property type="entry name" value="ung"/>
    <property type="match status" value="1"/>
</dbReference>
<dbReference type="PANTHER" id="PTHR11264">
    <property type="entry name" value="URACIL-DNA GLYCOSYLASE"/>
    <property type="match status" value="1"/>
</dbReference>
<dbReference type="PANTHER" id="PTHR11264:SF0">
    <property type="entry name" value="URACIL-DNA GLYCOSYLASE"/>
    <property type="match status" value="1"/>
</dbReference>
<dbReference type="Pfam" id="PF03167">
    <property type="entry name" value="UDG"/>
    <property type="match status" value="1"/>
</dbReference>
<dbReference type="SMART" id="SM00986">
    <property type="entry name" value="UDG"/>
    <property type="match status" value="1"/>
</dbReference>
<dbReference type="SMART" id="SM00987">
    <property type="entry name" value="UreE_C"/>
    <property type="match status" value="1"/>
</dbReference>
<dbReference type="SUPFAM" id="SSF52141">
    <property type="entry name" value="Uracil-DNA glycosylase-like"/>
    <property type="match status" value="1"/>
</dbReference>
<dbReference type="PROSITE" id="PS00130">
    <property type="entry name" value="U_DNA_GLYCOSYLASE"/>
    <property type="match status" value="1"/>
</dbReference>
<keyword id="KW-0227">DNA damage</keyword>
<keyword id="KW-0234">DNA repair</keyword>
<keyword id="KW-1048">Host nucleus</keyword>
<keyword id="KW-0378">Hydrolase</keyword>
<keyword id="KW-1185">Reference proteome</keyword>
<organism>
    <name type="scientific">Equine herpesvirus 1 (strain Ab4p)</name>
    <name type="common">EHV-1</name>
    <name type="synonym">Equine abortion virus</name>
    <dbReference type="NCBI Taxonomy" id="31520"/>
    <lineage>
        <taxon>Viruses</taxon>
        <taxon>Duplodnaviria</taxon>
        <taxon>Heunggongvirae</taxon>
        <taxon>Peploviricota</taxon>
        <taxon>Herviviricetes</taxon>
        <taxon>Herpesvirales</taxon>
        <taxon>Orthoherpesviridae</taxon>
        <taxon>Alphaherpesvirinae</taxon>
        <taxon>Varicellovirus</taxon>
        <taxon>Varicellovirus equidalpha1</taxon>
        <taxon>Equid alphaherpesvirus 1</taxon>
    </lineage>
</organism>
<evidence type="ECO:0000255" key="1">
    <source>
        <dbReference type="HAMAP-Rule" id="MF_04046"/>
    </source>
</evidence>
<evidence type="ECO:0000256" key="2">
    <source>
        <dbReference type="SAM" id="MobiDB-lite"/>
    </source>
</evidence>
<sequence length="312" mass="34778">MSSACDHETEASHVNIPETTPEENGSNSSTPTSEIGPACVVSPAPGETGAPPPKRRRPCGLPQGVALINTSVSTHPLFTTSCQSSWEDVEREFNIAPSWRPILEREMQQPYVRLLLNEYKLRCASEEVFPPKEDIFAWTRFSPPEKVRVVIVGQDPYHAPGQAHGLAFSVRKGVPVPPSLRNIYSAVQKSYPSFRHPMHGFLERWAEQGVLLINTTLTVARGKPGSHATLGWHRLVRAVIDRLCTTSQGLVFMLWGAHAQKSCSPNRQHHLVLTYGHPSPLSRVNFRDCPHFLEANAYLTKTGRKPVDWQIE</sequence>